<evidence type="ECO:0000255" key="1">
    <source>
        <dbReference type="PROSITE-ProRule" id="PRU00080"/>
    </source>
</evidence>
<evidence type="ECO:0000305" key="2"/>
<sequence>MEENIEKRICVEQLAIEDLISKLPEVLLSQILSYLPTKDIVRTSVLSKRWKSVWLLIPGLDLDSSEFPHYDTFVDFMNEFLFFSREENPCLHKLKLSIQKNENDPSCVTLWTDCVARGKLQHLDVEFGGRVMEREFWEMMPLSLYICKTLLHLRLYRVLLGNFDQSVDSLPSLKSMCLEENVYSNEASLESLISSCRVLEDLTIVKIDDNVRFLRVHSQSLTSLSVGYKSYYPGEIYYYYDRDRGNSGLVIDAPRLKYLTFNNDQSKSKTISNLGSLVKVTILGPIKISRVVGCTEQQMAHKFLTGISRVRYLIVSEDMMEVISSYLKEDSLPQFGNLSYLKASVWLSSFDFLDILPKLLESCPNLKSIVLETTCIVDRTKATVERRVSSVPECLLSSLEFVEIKNRISVDDGALEVARYFVENSVNLQKVVLRLASSFLRRGNQAVLKDILELPRRSSMCQIEVFNALNGHALCFRKNKITGRVFLDYFDVAESYYGAIVS</sequence>
<organism>
    <name type="scientific">Arabidopsis thaliana</name>
    <name type="common">Mouse-ear cress</name>
    <dbReference type="NCBI Taxonomy" id="3702"/>
    <lineage>
        <taxon>Eukaryota</taxon>
        <taxon>Viridiplantae</taxon>
        <taxon>Streptophyta</taxon>
        <taxon>Embryophyta</taxon>
        <taxon>Tracheophyta</taxon>
        <taxon>Spermatophyta</taxon>
        <taxon>Magnoliopsida</taxon>
        <taxon>eudicotyledons</taxon>
        <taxon>Gunneridae</taxon>
        <taxon>Pentapetalae</taxon>
        <taxon>rosids</taxon>
        <taxon>malvids</taxon>
        <taxon>Brassicales</taxon>
        <taxon>Brassicaceae</taxon>
        <taxon>Camelineae</taxon>
        <taxon>Arabidopsis</taxon>
    </lineage>
</organism>
<accession>Q9FNK0</accession>
<accession>F4K9Y5</accession>
<reference key="1">
    <citation type="journal article" date="1997" name="DNA Res.">
        <title>Structural analysis of Arabidopsis thaliana chromosome 5. II. Sequence features of the regions of 1,044,062 bp covered by thirteen physically assigned P1 clones.</title>
        <authorList>
            <person name="Kotani H."/>
            <person name="Nakamura Y."/>
            <person name="Sato S."/>
            <person name="Kaneko T."/>
            <person name="Asamizu E."/>
            <person name="Miyajima N."/>
            <person name="Tabata S."/>
        </authorList>
    </citation>
    <scope>NUCLEOTIDE SEQUENCE [LARGE SCALE GENOMIC DNA]</scope>
    <source>
        <strain>cv. Columbia</strain>
    </source>
</reference>
<reference key="2">
    <citation type="journal article" date="2017" name="Plant J.">
        <title>Araport11: a complete reannotation of the Arabidopsis thaliana reference genome.</title>
        <authorList>
            <person name="Cheng C.Y."/>
            <person name="Krishnakumar V."/>
            <person name="Chan A.P."/>
            <person name="Thibaud-Nissen F."/>
            <person name="Schobel S."/>
            <person name="Town C.D."/>
        </authorList>
    </citation>
    <scope>GENOME REANNOTATION</scope>
    <source>
        <strain>cv. Columbia</strain>
    </source>
</reference>
<proteinExistence type="predicted"/>
<keyword id="KW-0433">Leucine-rich repeat</keyword>
<keyword id="KW-1185">Reference proteome</keyword>
<keyword id="KW-0677">Repeat</keyword>
<comment type="sequence caution" evidence="2">
    <conflict type="erroneous gene model prediction">
        <sequence resource="EMBL-CDS" id="AED93051"/>
    </conflict>
</comment>
<name>FDL30_ARATH</name>
<dbReference type="EMBL" id="AB006699">
    <property type="protein sequence ID" value="BAB11667.1"/>
    <property type="molecule type" value="Genomic_DNA"/>
</dbReference>
<dbReference type="EMBL" id="CP002688">
    <property type="protein sequence ID" value="AED93051.1"/>
    <property type="status" value="ALT_SEQ"/>
    <property type="molecule type" value="Genomic_DNA"/>
</dbReference>
<dbReference type="EMBL" id="CP002688">
    <property type="protein sequence ID" value="ANM70114.1"/>
    <property type="molecule type" value="Genomic_DNA"/>
</dbReference>
<dbReference type="RefSeq" id="NP_001331747.1">
    <property type="nucleotide sequence ID" value="NM_001343742.1"/>
</dbReference>
<dbReference type="RefSeq" id="NP_197653.2">
    <property type="nucleotide sequence ID" value="NM_122167.3"/>
</dbReference>
<dbReference type="BioGRID" id="17599">
    <property type="interactions" value="1"/>
</dbReference>
<dbReference type="FunCoup" id="Q9FNK0">
    <property type="interactions" value="31"/>
</dbReference>
<dbReference type="IntAct" id="Q9FNK0">
    <property type="interactions" value="1"/>
</dbReference>
<dbReference type="iPTMnet" id="Q9FNK0"/>
<dbReference type="PaxDb" id="3702-AT5G22610.1"/>
<dbReference type="EnsemblPlants" id="AT5G22610.2">
    <property type="protein sequence ID" value="AT5G22610.2"/>
    <property type="gene ID" value="AT5G22610"/>
</dbReference>
<dbReference type="GeneID" id="832324"/>
<dbReference type="Gramene" id="AT5G22610.2">
    <property type="protein sequence ID" value="AT5G22610.2"/>
    <property type="gene ID" value="AT5G22610"/>
</dbReference>
<dbReference type="KEGG" id="ath:AT5G22610"/>
<dbReference type="Araport" id="AT5G22610"/>
<dbReference type="TAIR" id="AT5G22610"/>
<dbReference type="InParanoid" id="Q9FNK0"/>
<dbReference type="PhylomeDB" id="Q9FNK0"/>
<dbReference type="PRO" id="PR:Q9FNK0"/>
<dbReference type="Proteomes" id="UP000006548">
    <property type="component" value="Chromosome 5"/>
</dbReference>
<dbReference type="ExpressionAtlas" id="Q9FNK0">
    <property type="expression patterns" value="baseline and differential"/>
</dbReference>
<dbReference type="CDD" id="cd22160">
    <property type="entry name" value="F-box_AtFBL13-like"/>
    <property type="match status" value="1"/>
</dbReference>
<dbReference type="Gene3D" id="1.20.1280.50">
    <property type="match status" value="1"/>
</dbReference>
<dbReference type="Gene3D" id="3.80.10.10">
    <property type="entry name" value="Ribonuclease Inhibitor"/>
    <property type="match status" value="1"/>
</dbReference>
<dbReference type="InterPro" id="IPR036047">
    <property type="entry name" value="F-box-like_dom_sf"/>
</dbReference>
<dbReference type="InterPro" id="IPR053781">
    <property type="entry name" value="F-box_AtFBL13-like"/>
</dbReference>
<dbReference type="InterPro" id="IPR001810">
    <property type="entry name" value="F-box_dom"/>
</dbReference>
<dbReference type="InterPro" id="IPR006566">
    <property type="entry name" value="FBD"/>
</dbReference>
<dbReference type="InterPro" id="IPR050232">
    <property type="entry name" value="FBL13/AtMIF1-like"/>
</dbReference>
<dbReference type="InterPro" id="IPR032675">
    <property type="entry name" value="LRR_dom_sf"/>
</dbReference>
<dbReference type="InterPro" id="IPR055411">
    <property type="entry name" value="LRR_FXL15/At3g58940/PEG3-like"/>
</dbReference>
<dbReference type="PANTHER" id="PTHR31900">
    <property type="entry name" value="F-BOX/RNI SUPERFAMILY PROTEIN-RELATED"/>
    <property type="match status" value="1"/>
</dbReference>
<dbReference type="PANTHER" id="PTHR31900:SF25">
    <property type="entry name" value="FBD DOMAIN-CONTAINING PROTEIN"/>
    <property type="match status" value="1"/>
</dbReference>
<dbReference type="Pfam" id="PF00646">
    <property type="entry name" value="F-box"/>
    <property type="match status" value="1"/>
</dbReference>
<dbReference type="Pfam" id="PF08387">
    <property type="entry name" value="FBD"/>
    <property type="match status" value="1"/>
</dbReference>
<dbReference type="Pfam" id="PF24758">
    <property type="entry name" value="LRR_At5g56370"/>
    <property type="match status" value="1"/>
</dbReference>
<dbReference type="SMART" id="SM00579">
    <property type="entry name" value="FBD"/>
    <property type="match status" value="1"/>
</dbReference>
<dbReference type="SMART" id="SM00256">
    <property type="entry name" value="FBOX"/>
    <property type="match status" value="1"/>
</dbReference>
<dbReference type="SUPFAM" id="SSF81383">
    <property type="entry name" value="F-box domain"/>
    <property type="match status" value="1"/>
</dbReference>
<dbReference type="SUPFAM" id="SSF52047">
    <property type="entry name" value="RNI-like"/>
    <property type="match status" value="1"/>
</dbReference>
<dbReference type="PROSITE" id="PS50181">
    <property type="entry name" value="FBOX"/>
    <property type="match status" value="1"/>
</dbReference>
<gene>
    <name type="ordered locus">At5g22610</name>
    <name type="ORF">MDJ22.3</name>
</gene>
<feature type="chain" id="PRO_0000283122" description="Putative F-box/FBD/LRR-repeat protein At5g22610">
    <location>
        <begin position="1"/>
        <end position="502"/>
    </location>
</feature>
<feature type="domain" description="F-box" evidence="1">
    <location>
        <begin position="17"/>
        <end position="63"/>
    </location>
</feature>
<feature type="repeat" description="LRR 1">
    <location>
        <begin position="70"/>
        <end position="98"/>
    </location>
</feature>
<feature type="repeat" description="LRR 2">
    <location>
        <begin position="99"/>
        <end position="127"/>
    </location>
</feature>
<feature type="repeat" description="LRR 3">
    <location>
        <begin position="147"/>
        <end position="180"/>
    </location>
</feature>
<feature type="repeat" description="LRR 4">
    <location>
        <begin position="181"/>
        <end position="206"/>
    </location>
</feature>
<feature type="repeat" description="LRR 5">
    <location>
        <begin position="208"/>
        <end position="228"/>
    </location>
</feature>
<feature type="repeat" description="LRR 6">
    <location>
        <begin position="238"/>
        <end position="263"/>
    </location>
</feature>
<feature type="repeat" description="LRR 7">
    <location>
        <begin position="344"/>
        <end position="373"/>
    </location>
</feature>
<feature type="domain" description="FBD">
    <location>
        <begin position="384"/>
        <end position="435"/>
    </location>
</feature>
<protein>
    <recommendedName>
        <fullName>Putative F-box/FBD/LRR-repeat protein At5g22610</fullName>
    </recommendedName>
</protein>